<proteinExistence type="inferred from homology"/>
<comment type="function">
    <text evidence="1">Catalyzes the formation of 5-methyl-uridine at position 1939 (m5U1939) in 23S rRNA.</text>
</comment>
<comment type="catalytic activity">
    <reaction evidence="1">
        <text>uridine(1939) in 23S rRNA + S-adenosyl-L-methionine = 5-methyluridine(1939) in 23S rRNA + S-adenosyl-L-homocysteine + H(+)</text>
        <dbReference type="Rhea" id="RHEA:42908"/>
        <dbReference type="Rhea" id="RHEA-COMP:10278"/>
        <dbReference type="Rhea" id="RHEA-COMP:10279"/>
        <dbReference type="ChEBI" id="CHEBI:15378"/>
        <dbReference type="ChEBI" id="CHEBI:57856"/>
        <dbReference type="ChEBI" id="CHEBI:59789"/>
        <dbReference type="ChEBI" id="CHEBI:65315"/>
        <dbReference type="ChEBI" id="CHEBI:74447"/>
        <dbReference type="EC" id="2.1.1.190"/>
    </reaction>
</comment>
<comment type="similarity">
    <text evidence="1">Belongs to the class I-like SAM-binding methyltransferase superfamily. RNA M5U methyltransferase family. RlmD subfamily.</text>
</comment>
<feature type="chain" id="PRO_0000282052" description="23S rRNA (uracil(1939)-C(5))-methyltransferase RlmD">
    <location>
        <begin position="1"/>
        <end position="450"/>
    </location>
</feature>
<feature type="domain" description="TRAM" evidence="1">
    <location>
        <begin position="20"/>
        <end position="78"/>
    </location>
</feature>
<feature type="region of interest" description="Disordered" evidence="2">
    <location>
        <begin position="1"/>
        <end position="22"/>
    </location>
</feature>
<feature type="active site" description="Nucleophile" evidence="1">
    <location>
        <position position="407"/>
    </location>
</feature>
<feature type="binding site" evidence="1">
    <location>
        <position position="91"/>
    </location>
    <ligand>
        <name>[4Fe-4S] cluster</name>
        <dbReference type="ChEBI" id="CHEBI:49883"/>
    </ligand>
</feature>
<feature type="binding site" evidence="1">
    <location>
        <position position="97"/>
    </location>
    <ligand>
        <name>[4Fe-4S] cluster</name>
        <dbReference type="ChEBI" id="CHEBI:49883"/>
    </ligand>
</feature>
<feature type="binding site" evidence="1">
    <location>
        <position position="100"/>
    </location>
    <ligand>
        <name>[4Fe-4S] cluster</name>
        <dbReference type="ChEBI" id="CHEBI:49883"/>
    </ligand>
</feature>
<feature type="binding site" evidence="1">
    <location>
        <position position="179"/>
    </location>
    <ligand>
        <name>[4Fe-4S] cluster</name>
        <dbReference type="ChEBI" id="CHEBI:49883"/>
    </ligand>
</feature>
<feature type="binding site" evidence="1">
    <location>
        <position position="283"/>
    </location>
    <ligand>
        <name>S-adenosyl-L-methionine</name>
        <dbReference type="ChEBI" id="CHEBI:59789"/>
    </ligand>
</feature>
<feature type="binding site" evidence="1">
    <location>
        <position position="312"/>
    </location>
    <ligand>
        <name>S-adenosyl-L-methionine</name>
        <dbReference type="ChEBI" id="CHEBI:59789"/>
    </ligand>
</feature>
<feature type="binding site" evidence="1">
    <location>
        <position position="317"/>
    </location>
    <ligand>
        <name>S-adenosyl-L-methionine</name>
        <dbReference type="ChEBI" id="CHEBI:59789"/>
    </ligand>
</feature>
<feature type="binding site" evidence="1">
    <location>
        <position position="333"/>
    </location>
    <ligand>
        <name>S-adenosyl-L-methionine</name>
        <dbReference type="ChEBI" id="CHEBI:59789"/>
    </ligand>
</feature>
<feature type="binding site" evidence="1">
    <location>
        <position position="360"/>
    </location>
    <ligand>
        <name>S-adenosyl-L-methionine</name>
        <dbReference type="ChEBI" id="CHEBI:59789"/>
    </ligand>
</feature>
<feature type="binding site" evidence="1">
    <location>
        <position position="381"/>
    </location>
    <ligand>
        <name>S-adenosyl-L-methionine</name>
        <dbReference type="ChEBI" id="CHEBI:59789"/>
    </ligand>
</feature>
<sequence length="450" mass="49071">MARNKGGLRFQPSGGARGPAIPVGKKQRLTIERLAHDGRGIAHEAGMTWFVSGGLPGEELEARVLGARSKVVDARSERLFSSSDLRRREPCTVAGRCGGCTLQHLEHGEQLALKQRTLQEQLQRFAGIEPEEWAAPLVGPEFGYRRRARIAVRWDARARRLDVGFRASASQEIVAFDECLVLVPPLQTIARALPALLQDFRKPESIGHVELFHGTASALLLRHTTALVDEDRQRLAAFCSAHQAQLWLQGAEQPLPVEPAAELGYSLGDWQLTLAYRPGDFVQVNAPVNESMIRQALDWLAPTADERVLDLFCGLGNFSLPLARRVARVVGVEGVAAMVERAGANALANGLGNAHFFQADLSKALAEAPWAEQGFTAVLLDPPRDGAFEAVREMSSLGARRVVYVSCNPATLARDAGEMARQGYRLKRAGILDMFPQTAHVEAMALFEAG</sequence>
<dbReference type="EC" id="2.1.1.190" evidence="1"/>
<dbReference type="EMBL" id="CP000438">
    <property type="protein sequence ID" value="ABJ10092.1"/>
    <property type="molecule type" value="Genomic_DNA"/>
</dbReference>
<dbReference type="RefSeq" id="WP_003102417.1">
    <property type="nucleotide sequence ID" value="NZ_CP034244.1"/>
</dbReference>
<dbReference type="SMR" id="Q02I93"/>
<dbReference type="KEGG" id="pau:PA14_52190"/>
<dbReference type="PseudoCAP" id="PA14_52190"/>
<dbReference type="HOGENOM" id="CLU_014689_8_2_6"/>
<dbReference type="BioCyc" id="PAER208963:G1G74-4392-MONOMER"/>
<dbReference type="Proteomes" id="UP000000653">
    <property type="component" value="Chromosome"/>
</dbReference>
<dbReference type="GO" id="GO:0051539">
    <property type="term" value="F:4 iron, 4 sulfur cluster binding"/>
    <property type="evidence" value="ECO:0007669"/>
    <property type="project" value="UniProtKB-KW"/>
</dbReference>
<dbReference type="GO" id="GO:0005506">
    <property type="term" value="F:iron ion binding"/>
    <property type="evidence" value="ECO:0007669"/>
    <property type="project" value="UniProtKB-UniRule"/>
</dbReference>
<dbReference type="GO" id="GO:0003723">
    <property type="term" value="F:RNA binding"/>
    <property type="evidence" value="ECO:0007669"/>
    <property type="project" value="InterPro"/>
</dbReference>
<dbReference type="GO" id="GO:0070041">
    <property type="term" value="F:rRNA (uridine-C5-)-methyltransferase activity"/>
    <property type="evidence" value="ECO:0007669"/>
    <property type="project" value="UniProtKB-UniRule"/>
</dbReference>
<dbReference type="GO" id="GO:0070475">
    <property type="term" value="P:rRNA base methylation"/>
    <property type="evidence" value="ECO:0007669"/>
    <property type="project" value="TreeGrafter"/>
</dbReference>
<dbReference type="CDD" id="cd02440">
    <property type="entry name" value="AdoMet_MTases"/>
    <property type="match status" value="1"/>
</dbReference>
<dbReference type="FunFam" id="3.40.50.150:FF:000009">
    <property type="entry name" value="23S rRNA (Uracil(1939)-C(5))-methyltransferase RlmD"/>
    <property type="match status" value="1"/>
</dbReference>
<dbReference type="FunFam" id="2.40.50.140:FF:000458">
    <property type="entry name" value="23S rRNA (uracil(1939)-C(5))-methyltransferase RlmD"/>
    <property type="match status" value="1"/>
</dbReference>
<dbReference type="Gene3D" id="2.40.50.1070">
    <property type="match status" value="1"/>
</dbReference>
<dbReference type="Gene3D" id="2.40.50.140">
    <property type="entry name" value="Nucleic acid-binding proteins"/>
    <property type="match status" value="1"/>
</dbReference>
<dbReference type="Gene3D" id="3.40.50.150">
    <property type="entry name" value="Vaccinia Virus protein VP39"/>
    <property type="match status" value="1"/>
</dbReference>
<dbReference type="HAMAP" id="MF_01010">
    <property type="entry name" value="23SrRNA_methyltr_RlmD"/>
    <property type="match status" value="1"/>
</dbReference>
<dbReference type="InterPro" id="IPR001566">
    <property type="entry name" value="23S_rRNA_MeTrfase_RlmD"/>
</dbReference>
<dbReference type="InterPro" id="IPR030390">
    <property type="entry name" value="MeTrfase_TrmA_AS"/>
</dbReference>
<dbReference type="InterPro" id="IPR030391">
    <property type="entry name" value="MeTrfase_TrmA_CS"/>
</dbReference>
<dbReference type="InterPro" id="IPR012340">
    <property type="entry name" value="NA-bd_OB-fold"/>
</dbReference>
<dbReference type="InterPro" id="IPR029063">
    <property type="entry name" value="SAM-dependent_MTases_sf"/>
</dbReference>
<dbReference type="InterPro" id="IPR002792">
    <property type="entry name" value="TRAM_dom"/>
</dbReference>
<dbReference type="InterPro" id="IPR010280">
    <property type="entry name" value="U5_MeTrfase_fam"/>
</dbReference>
<dbReference type="NCBIfam" id="NF009639">
    <property type="entry name" value="PRK13168.1"/>
    <property type="match status" value="1"/>
</dbReference>
<dbReference type="NCBIfam" id="TIGR00479">
    <property type="entry name" value="rumA"/>
    <property type="match status" value="1"/>
</dbReference>
<dbReference type="PANTHER" id="PTHR11061:SF49">
    <property type="entry name" value="23S RRNA (URACIL(1939)-C(5))-METHYLTRANSFERASE RLMD"/>
    <property type="match status" value="1"/>
</dbReference>
<dbReference type="PANTHER" id="PTHR11061">
    <property type="entry name" value="RNA M5U METHYLTRANSFERASE"/>
    <property type="match status" value="1"/>
</dbReference>
<dbReference type="Pfam" id="PF01938">
    <property type="entry name" value="TRAM"/>
    <property type="match status" value="1"/>
</dbReference>
<dbReference type="Pfam" id="PF05958">
    <property type="entry name" value="tRNA_U5-meth_tr"/>
    <property type="match status" value="1"/>
</dbReference>
<dbReference type="SUPFAM" id="SSF50249">
    <property type="entry name" value="Nucleic acid-binding proteins"/>
    <property type="match status" value="1"/>
</dbReference>
<dbReference type="SUPFAM" id="SSF53335">
    <property type="entry name" value="S-adenosyl-L-methionine-dependent methyltransferases"/>
    <property type="match status" value="1"/>
</dbReference>
<dbReference type="PROSITE" id="PS51687">
    <property type="entry name" value="SAM_MT_RNA_M5U"/>
    <property type="match status" value="1"/>
</dbReference>
<dbReference type="PROSITE" id="PS50926">
    <property type="entry name" value="TRAM"/>
    <property type="match status" value="1"/>
</dbReference>
<dbReference type="PROSITE" id="PS01230">
    <property type="entry name" value="TRMA_1"/>
    <property type="match status" value="1"/>
</dbReference>
<dbReference type="PROSITE" id="PS01231">
    <property type="entry name" value="TRMA_2"/>
    <property type="match status" value="1"/>
</dbReference>
<gene>
    <name evidence="1" type="primary">rlmD</name>
    <name type="synonym">rumA</name>
    <name type="ordered locus">PA14_52190</name>
</gene>
<keyword id="KW-0004">4Fe-4S</keyword>
<keyword id="KW-0408">Iron</keyword>
<keyword id="KW-0411">Iron-sulfur</keyword>
<keyword id="KW-0479">Metal-binding</keyword>
<keyword id="KW-0489">Methyltransferase</keyword>
<keyword id="KW-0698">rRNA processing</keyword>
<keyword id="KW-0949">S-adenosyl-L-methionine</keyword>
<keyword id="KW-0808">Transferase</keyword>
<reference key="1">
    <citation type="journal article" date="2006" name="Genome Biol.">
        <title>Genomic analysis reveals that Pseudomonas aeruginosa virulence is combinatorial.</title>
        <authorList>
            <person name="Lee D.G."/>
            <person name="Urbach J.M."/>
            <person name="Wu G."/>
            <person name="Liberati N.T."/>
            <person name="Feinbaum R.L."/>
            <person name="Miyata S."/>
            <person name="Diggins L.T."/>
            <person name="He J."/>
            <person name="Saucier M."/>
            <person name="Deziel E."/>
            <person name="Friedman L."/>
            <person name="Li L."/>
            <person name="Grills G."/>
            <person name="Montgomery K."/>
            <person name="Kucherlapati R."/>
            <person name="Rahme L.G."/>
            <person name="Ausubel F.M."/>
        </authorList>
    </citation>
    <scope>NUCLEOTIDE SEQUENCE [LARGE SCALE GENOMIC DNA]</scope>
    <source>
        <strain>UCBPP-PA14</strain>
    </source>
</reference>
<protein>
    <recommendedName>
        <fullName evidence="1">23S rRNA (uracil(1939)-C(5))-methyltransferase RlmD</fullName>
        <ecNumber evidence="1">2.1.1.190</ecNumber>
    </recommendedName>
    <alternativeName>
        <fullName evidence="1">23S rRNA(m5U1939)-methyltransferase</fullName>
    </alternativeName>
</protein>
<evidence type="ECO:0000255" key="1">
    <source>
        <dbReference type="HAMAP-Rule" id="MF_01010"/>
    </source>
</evidence>
<evidence type="ECO:0000256" key="2">
    <source>
        <dbReference type="SAM" id="MobiDB-lite"/>
    </source>
</evidence>
<accession>Q02I93</accession>
<organism>
    <name type="scientific">Pseudomonas aeruginosa (strain UCBPP-PA14)</name>
    <dbReference type="NCBI Taxonomy" id="208963"/>
    <lineage>
        <taxon>Bacteria</taxon>
        <taxon>Pseudomonadati</taxon>
        <taxon>Pseudomonadota</taxon>
        <taxon>Gammaproteobacteria</taxon>
        <taxon>Pseudomonadales</taxon>
        <taxon>Pseudomonadaceae</taxon>
        <taxon>Pseudomonas</taxon>
    </lineage>
</organism>
<name>RLMD_PSEAB</name>